<dbReference type="EMBL" id="CP000744">
    <property type="protein sequence ID" value="ABR82019.1"/>
    <property type="status" value="ALT_INIT"/>
    <property type="molecule type" value="Genomic_DNA"/>
</dbReference>
<dbReference type="RefSeq" id="WP_003093701.1">
    <property type="nucleotide sequence ID" value="NC_009656.1"/>
</dbReference>
<dbReference type="SMR" id="A6UZK1"/>
<dbReference type="GeneID" id="77219211"/>
<dbReference type="KEGG" id="pap:PSPA7_0850"/>
<dbReference type="HOGENOM" id="CLU_139869_0_1_6"/>
<dbReference type="Proteomes" id="UP000001582">
    <property type="component" value="Chromosome"/>
</dbReference>
<dbReference type="GO" id="GO:0005737">
    <property type="term" value="C:cytoplasm"/>
    <property type="evidence" value="ECO:0007669"/>
    <property type="project" value="UniProtKB-ARBA"/>
</dbReference>
<dbReference type="GO" id="GO:0015935">
    <property type="term" value="C:small ribosomal subunit"/>
    <property type="evidence" value="ECO:0007669"/>
    <property type="project" value="TreeGrafter"/>
</dbReference>
<dbReference type="GO" id="GO:0019843">
    <property type="term" value="F:rRNA binding"/>
    <property type="evidence" value="ECO:0007669"/>
    <property type="project" value="UniProtKB-UniRule"/>
</dbReference>
<dbReference type="GO" id="GO:0003735">
    <property type="term" value="F:structural constituent of ribosome"/>
    <property type="evidence" value="ECO:0007669"/>
    <property type="project" value="InterPro"/>
</dbReference>
<dbReference type="GO" id="GO:0006412">
    <property type="term" value="P:translation"/>
    <property type="evidence" value="ECO:0007669"/>
    <property type="project" value="UniProtKB-UniRule"/>
</dbReference>
<dbReference type="FunFam" id="1.10.287.1480:FF:000001">
    <property type="entry name" value="30S ribosomal protein S14"/>
    <property type="match status" value="1"/>
</dbReference>
<dbReference type="Gene3D" id="1.10.287.1480">
    <property type="match status" value="1"/>
</dbReference>
<dbReference type="HAMAP" id="MF_00537">
    <property type="entry name" value="Ribosomal_uS14_1"/>
    <property type="match status" value="1"/>
</dbReference>
<dbReference type="InterPro" id="IPR001209">
    <property type="entry name" value="Ribosomal_uS14"/>
</dbReference>
<dbReference type="InterPro" id="IPR023036">
    <property type="entry name" value="Ribosomal_uS14_bac/plastid"/>
</dbReference>
<dbReference type="InterPro" id="IPR018271">
    <property type="entry name" value="Ribosomal_uS14_CS"/>
</dbReference>
<dbReference type="NCBIfam" id="NF006477">
    <property type="entry name" value="PRK08881.1"/>
    <property type="match status" value="1"/>
</dbReference>
<dbReference type="PANTHER" id="PTHR19836">
    <property type="entry name" value="30S RIBOSOMAL PROTEIN S14"/>
    <property type="match status" value="1"/>
</dbReference>
<dbReference type="PANTHER" id="PTHR19836:SF19">
    <property type="entry name" value="SMALL RIBOSOMAL SUBUNIT PROTEIN US14M"/>
    <property type="match status" value="1"/>
</dbReference>
<dbReference type="Pfam" id="PF00253">
    <property type="entry name" value="Ribosomal_S14"/>
    <property type="match status" value="1"/>
</dbReference>
<dbReference type="SUPFAM" id="SSF57716">
    <property type="entry name" value="Glucocorticoid receptor-like (DNA-binding domain)"/>
    <property type="match status" value="1"/>
</dbReference>
<dbReference type="PROSITE" id="PS00527">
    <property type="entry name" value="RIBOSOMAL_S14"/>
    <property type="match status" value="1"/>
</dbReference>
<feature type="chain" id="PRO_0000354390" description="Small ribosomal subunit protein uS14">
    <location>
        <begin position="1"/>
        <end position="101"/>
    </location>
</feature>
<accession>A6UZK1</accession>
<comment type="function">
    <text evidence="1">Binds 16S rRNA, required for the assembly of 30S particles and may also be responsible for determining the conformation of the 16S rRNA at the A site.</text>
</comment>
<comment type="subunit">
    <text evidence="1">Part of the 30S ribosomal subunit. Contacts proteins S3 and S10.</text>
</comment>
<comment type="similarity">
    <text evidence="1">Belongs to the universal ribosomal protein uS14 family.</text>
</comment>
<comment type="sequence caution" evidence="2">
    <conflict type="erroneous initiation">
        <sequence resource="EMBL-CDS" id="ABR82019"/>
    </conflict>
</comment>
<sequence>MAKESMKNRELKRQLTVAKYAKKRAELKAIIANPNSSAEERWNAQVALQKQPRDASASRLRNRCRLTGRPHGFYRKFGLSRNKLREAAMRGDVPGLVKASW</sequence>
<proteinExistence type="inferred from homology"/>
<organism>
    <name type="scientific">Pseudomonas paraeruginosa (strain DSM 24068 / PA7)</name>
    <name type="common">Pseudomonas aeruginosa (strain PA7)</name>
    <dbReference type="NCBI Taxonomy" id="381754"/>
    <lineage>
        <taxon>Bacteria</taxon>
        <taxon>Pseudomonadati</taxon>
        <taxon>Pseudomonadota</taxon>
        <taxon>Gammaproteobacteria</taxon>
        <taxon>Pseudomonadales</taxon>
        <taxon>Pseudomonadaceae</taxon>
        <taxon>Pseudomonas</taxon>
        <taxon>Pseudomonas paraeruginosa</taxon>
    </lineage>
</organism>
<evidence type="ECO:0000255" key="1">
    <source>
        <dbReference type="HAMAP-Rule" id="MF_00537"/>
    </source>
</evidence>
<evidence type="ECO:0000305" key="2"/>
<protein>
    <recommendedName>
        <fullName evidence="1">Small ribosomal subunit protein uS14</fullName>
    </recommendedName>
    <alternativeName>
        <fullName evidence="2">30S ribosomal protein S14</fullName>
    </alternativeName>
</protein>
<gene>
    <name evidence="1" type="primary">rpsN</name>
    <name type="ordered locus">PSPA7_0850</name>
</gene>
<reference key="1">
    <citation type="submission" date="2007-06" db="EMBL/GenBank/DDBJ databases">
        <authorList>
            <person name="Dodson R.J."/>
            <person name="Harkins D."/>
            <person name="Paulsen I.T."/>
        </authorList>
    </citation>
    <scope>NUCLEOTIDE SEQUENCE [LARGE SCALE GENOMIC DNA]</scope>
    <source>
        <strain>DSM 24068 / PA7</strain>
    </source>
</reference>
<keyword id="KW-0687">Ribonucleoprotein</keyword>
<keyword id="KW-0689">Ribosomal protein</keyword>
<keyword id="KW-0694">RNA-binding</keyword>
<keyword id="KW-0699">rRNA-binding</keyword>
<name>RS14_PSEP7</name>